<reference key="1">
    <citation type="journal article" date="2004" name="Nat. Genet.">
        <title>Complete sequencing and characterization of 21,243 full-length human cDNAs.</title>
        <authorList>
            <person name="Ota T."/>
            <person name="Suzuki Y."/>
            <person name="Nishikawa T."/>
            <person name="Otsuki T."/>
            <person name="Sugiyama T."/>
            <person name="Irie R."/>
            <person name="Wakamatsu A."/>
            <person name="Hayashi K."/>
            <person name="Sato H."/>
            <person name="Nagai K."/>
            <person name="Kimura K."/>
            <person name="Makita H."/>
            <person name="Sekine M."/>
            <person name="Obayashi M."/>
            <person name="Nishi T."/>
            <person name="Shibahara T."/>
            <person name="Tanaka T."/>
            <person name="Ishii S."/>
            <person name="Yamamoto J."/>
            <person name="Saito K."/>
            <person name="Kawai Y."/>
            <person name="Isono Y."/>
            <person name="Nakamura Y."/>
            <person name="Nagahari K."/>
            <person name="Murakami K."/>
            <person name="Yasuda T."/>
            <person name="Iwayanagi T."/>
            <person name="Wagatsuma M."/>
            <person name="Shiratori A."/>
            <person name="Sudo H."/>
            <person name="Hosoiri T."/>
            <person name="Kaku Y."/>
            <person name="Kodaira H."/>
            <person name="Kondo H."/>
            <person name="Sugawara M."/>
            <person name="Takahashi M."/>
            <person name="Kanda K."/>
            <person name="Yokoi T."/>
            <person name="Furuya T."/>
            <person name="Kikkawa E."/>
            <person name="Omura Y."/>
            <person name="Abe K."/>
            <person name="Kamihara K."/>
            <person name="Katsuta N."/>
            <person name="Sato K."/>
            <person name="Tanikawa M."/>
            <person name="Yamazaki M."/>
            <person name="Ninomiya K."/>
            <person name="Ishibashi T."/>
            <person name="Yamashita H."/>
            <person name="Murakawa K."/>
            <person name="Fujimori K."/>
            <person name="Tanai H."/>
            <person name="Kimata M."/>
            <person name="Watanabe M."/>
            <person name="Hiraoka S."/>
            <person name="Chiba Y."/>
            <person name="Ishida S."/>
            <person name="Ono Y."/>
            <person name="Takiguchi S."/>
            <person name="Watanabe S."/>
            <person name="Yosida M."/>
            <person name="Hotuta T."/>
            <person name="Kusano J."/>
            <person name="Kanehori K."/>
            <person name="Takahashi-Fujii A."/>
            <person name="Hara H."/>
            <person name="Tanase T.-O."/>
            <person name="Nomura Y."/>
            <person name="Togiya S."/>
            <person name="Komai F."/>
            <person name="Hara R."/>
            <person name="Takeuchi K."/>
            <person name="Arita M."/>
            <person name="Imose N."/>
            <person name="Musashino K."/>
            <person name="Yuuki H."/>
            <person name="Oshima A."/>
            <person name="Sasaki N."/>
            <person name="Aotsuka S."/>
            <person name="Yoshikawa Y."/>
            <person name="Matsunawa H."/>
            <person name="Ichihara T."/>
            <person name="Shiohata N."/>
            <person name="Sano S."/>
            <person name="Moriya S."/>
            <person name="Momiyama H."/>
            <person name="Satoh N."/>
            <person name="Takami S."/>
            <person name="Terashima Y."/>
            <person name="Suzuki O."/>
            <person name="Nakagawa S."/>
            <person name="Senoh A."/>
            <person name="Mizoguchi H."/>
            <person name="Goto Y."/>
            <person name="Shimizu F."/>
            <person name="Wakebe H."/>
            <person name="Hishigaki H."/>
            <person name="Watanabe T."/>
            <person name="Sugiyama A."/>
            <person name="Takemoto M."/>
            <person name="Kawakami B."/>
            <person name="Yamazaki M."/>
            <person name="Watanabe K."/>
            <person name="Kumagai A."/>
            <person name="Itakura S."/>
            <person name="Fukuzumi Y."/>
            <person name="Fujimori Y."/>
            <person name="Komiyama M."/>
            <person name="Tashiro H."/>
            <person name="Tanigami A."/>
            <person name="Fujiwara T."/>
            <person name="Ono T."/>
            <person name="Yamada K."/>
            <person name="Fujii Y."/>
            <person name="Ozaki K."/>
            <person name="Hirao M."/>
            <person name="Ohmori Y."/>
            <person name="Kawabata A."/>
            <person name="Hikiji T."/>
            <person name="Kobatake N."/>
            <person name="Inagaki H."/>
            <person name="Ikema Y."/>
            <person name="Okamoto S."/>
            <person name="Okitani R."/>
            <person name="Kawakami T."/>
            <person name="Noguchi S."/>
            <person name="Itoh T."/>
            <person name="Shigeta K."/>
            <person name="Senba T."/>
            <person name="Matsumura K."/>
            <person name="Nakajima Y."/>
            <person name="Mizuno T."/>
            <person name="Morinaga M."/>
            <person name="Sasaki M."/>
            <person name="Togashi T."/>
            <person name="Oyama M."/>
            <person name="Hata H."/>
            <person name="Watanabe M."/>
            <person name="Komatsu T."/>
            <person name="Mizushima-Sugano J."/>
            <person name="Satoh T."/>
            <person name="Shirai Y."/>
            <person name="Takahashi Y."/>
            <person name="Nakagawa K."/>
            <person name="Okumura K."/>
            <person name="Nagase T."/>
            <person name="Nomura N."/>
            <person name="Kikuchi H."/>
            <person name="Masuho Y."/>
            <person name="Yamashita R."/>
            <person name="Nakai K."/>
            <person name="Yada T."/>
            <person name="Nakamura Y."/>
            <person name="Ohara O."/>
            <person name="Isogai T."/>
            <person name="Sugano S."/>
        </authorList>
    </citation>
    <scope>NUCLEOTIDE SEQUENCE [LARGE SCALE MRNA] (ISOFORM 2)</scope>
    <source>
        <tissue>Placenta</tissue>
    </source>
</reference>
<reference key="2">
    <citation type="submission" date="2005-09" db="EMBL/GenBank/DDBJ databases">
        <authorList>
            <person name="Mural R.J."/>
            <person name="Istrail S."/>
            <person name="Sutton G.G."/>
            <person name="Florea L."/>
            <person name="Halpern A.L."/>
            <person name="Mobarry C.M."/>
            <person name="Lippert R."/>
            <person name="Walenz B."/>
            <person name="Shatkay H."/>
            <person name="Dew I."/>
            <person name="Miller J.R."/>
            <person name="Flanigan M.J."/>
            <person name="Edwards N.J."/>
            <person name="Bolanos R."/>
            <person name="Fasulo D."/>
            <person name="Halldorsson B.V."/>
            <person name="Hannenhalli S."/>
            <person name="Turner R."/>
            <person name="Yooseph S."/>
            <person name="Lu F."/>
            <person name="Nusskern D.R."/>
            <person name="Shue B.C."/>
            <person name="Zheng X.H."/>
            <person name="Zhong F."/>
            <person name="Delcher A.L."/>
            <person name="Huson D.H."/>
            <person name="Kravitz S.A."/>
            <person name="Mouchard L."/>
            <person name="Reinert K."/>
            <person name="Remington K.A."/>
            <person name="Clark A.G."/>
            <person name="Waterman M.S."/>
            <person name="Eichler E.E."/>
            <person name="Adams M.D."/>
            <person name="Hunkapiller M.W."/>
            <person name="Myers E.W."/>
            <person name="Venter J.C."/>
        </authorList>
    </citation>
    <scope>NUCLEOTIDE SEQUENCE [LARGE SCALE GENOMIC DNA]</scope>
</reference>
<reference key="3">
    <citation type="journal article" date="2004" name="Genome Res.">
        <title>The status, quality, and expansion of the NIH full-length cDNA project: the Mammalian Gene Collection (MGC).</title>
        <authorList>
            <consortium name="The MGC Project Team"/>
        </authorList>
    </citation>
    <scope>NUCLEOTIDE SEQUENCE [LARGE SCALE MRNA] (ISOFORM 1)</scope>
    <scope>VARIANT ASP-119</scope>
    <source>
        <tissue>Brain</tissue>
    </source>
</reference>
<reference key="4">
    <citation type="journal article" date="2014" name="J. Proteomics">
        <title>An enzyme assisted RP-RPLC approach for in-depth analysis of human liver phosphoproteome.</title>
        <authorList>
            <person name="Bian Y."/>
            <person name="Song C."/>
            <person name="Cheng K."/>
            <person name="Dong M."/>
            <person name="Wang F."/>
            <person name="Huang J."/>
            <person name="Sun D."/>
            <person name="Wang L."/>
            <person name="Ye M."/>
            <person name="Zou H."/>
        </authorList>
    </citation>
    <scope>IDENTIFICATION BY MASS SPECTROMETRY [LARGE SCALE ANALYSIS]</scope>
    <source>
        <tissue>Liver</tissue>
    </source>
</reference>
<protein>
    <recommendedName>
        <fullName>Enoyl-CoA hydratase domain-containing protein 2, mitochondrial</fullName>
    </recommendedName>
</protein>
<feature type="transit peptide" description="Mitochondrion" evidence="3">
    <location>
        <begin position="1"/>
        <end position="35"/>
    </location>
</feature>
<feature type="chain" id="PRO_0000309459" description="Enoyl-CoA hydratase domain-containing protein 2, mitochondrial">
    <location>
        <begin position="36"/>
        <end position="292"/>
    </location>
</feature>
<feature type="site" description="Important for catalytic activity" evidence="1">
    <location>
        <position position="142"/>
    </location>
</feature>
<feature type="site" description="Important for catalytic activity" evidence="1">
    <location>
        <position position="162"/>
    </location>
</feature>
<feature type="modified residue" description="N6-acetyllysine; alternate" evidence="2">
    <location>
        <position position="97"/>
    </location>
</feature>
<feature type="modified residue" description="N6-succinyllysine; alternate" evidence="2">
    <location>
        <position position="97"/>
    </location>
</feature>
<feature type="splice variant" id="VSP_029177" description="In isoform 2." evidence="5">
    <location>
        <begin position="122"/>
        <end position="152"/>
    </location>
</feature>
<feature type="sequence variant" id="VAR_036951" description="In dbSNP:rs17854314." evidence="4">
    <original>N</original>
    <variation>D</variation>
    <location>
        <position position="119"/>
    </location>
</feature>
<feature type="sequence conflict" description="In Ref. 1; BAA91922." evidence="6" ref="1">
    <original>V</original>
    <variation>A</variation>
    <location>
        <position position="89"/>
    </location>
</feature>
<feature type="sequence conflict" description="In Ref. 1; BAA91922." evidence="6" ref="1">
    <original>D</original>
    <variation>N</variation>
    <location>
        <position position="247"/>
    </location>
</feature>
<proteinExistence type="evidence at protein level"/>
<organism>
    <name type="scientific">Homo sapiens</name>
    <name type="common">Human</name>
    <dbReference type="NCBI Taxonomy" id="9606"/>
    <lineage>
        <taxon>Eukaryota</taxon>
        <taxon>Metazoa</taxon>
        <taxon>Chordata</taxon>
        <taxon>Craniata</taxon>
        <taxon>Vertebrata</taxon>
        <taxon>Euteleostomi</taxon>
        <taxon>Mammalia</taxon>
        <taxon>Eutheria</taxon>
        <taxon>Euarchontoglires</taxon>
        <taxon>Primates</taxon>
        <taxon>Haplorrhini</taxon>
        <taxon>Catarrhini</taxon>
        <taxon>Hominidae</taxon>
        <taxon>Homo</taxon>
    </lineage>
</organism>
<sequence length="292" mass="31126">MLRVLCLLRPWRPLRARGCASDGAAGGSEIQVRALAGPDQGITEILMNRPSARNALGNVFVSELLETLAQLREDRQVRVLLFRSGVKGVFCAGADLKEREQMSEAEVGVFVQRLRGLMNDIAAFPAPTIAAMDGFALGGGLELALACDLRVAASSAVMGLIETTRGLLPGAGGTQRLPRCLGVALAKELIFTGRRLSGTEAHVLGLVNHAVAQNEEGDAAYQRARALAQEILPQAPIAVRLGKVAIDRGTEVDIASGMAIEGMCYAQNIPTRDRLEGMAAFREKRTPKFVGK</sequence>
<name>ECHD2_HUMAN</name>
<dbReference type="EMBL" id="AK001810">
    <property type="protein sequence ID" value="BAA91922.1"/>
    <property type="molecule type" value="mRNA"/>
</dbReference>
<dbReference type="EMBL" id="CH471059">
    <property type="protein sequence ID" value="EAX06763.1"/>
    <property type="molecule type" value="Genomic_DNA"/>
</dbReference>
<dbReference type="EMBL" id="CH471059">
    <property type="protein sequence ID" value="EAX06768.1"/>
    <property type="molecule type" value="Genomic_DNA"/>
</dbReference>
<dbReference type="EMBL" id="BC044574">
    <property type="protein sequence ID" value="AAH44574.1"/>
    <property type="molecule type" value="mRNA"/>
</dbReference>
<dbReference type="CCDS" id="CCDS55600.1">
    <molecule id="Q86YB7-1"/>
</dbReference>
<dbReference type="CCDS" id="CCDS571.1">
    <molecule id="Q86YB7-2"/>
</dbReference>
<dbReference type="RefSeq" id="NP_001185890.1">
    <molecule id="Q86YB7-1"/>
    <property type="nucleotide sequence ID" value="NM_001198961.2"/>
</dbReference>
<dbReference type="RefSeq" id="NP_060751.2">
    <molecule id="Q86YB7-2"/>
    <property type="nucleotide sequence ID" value="NM_018281.4"/>
</dbReference>
<dbReference type="RefSeq" id="XP_011540012.1">
    <property type="nucleotide sequence ID" value="XM_011541710.2"/>
</dbReference>
<dbReference type="RefSeq" id="XP_011540027.1">
    <property type="nucleotide sequence ID" value="XM_011541725.2"/>
</dbReference>
<dbReference type="SMR" id="Q86YB7"/>
<dbReference type="BioGRID" id="120557">
    <property type="interactions" value="22"/>
</dbReference>
<dbReference type="FunCoup" id="Q86YB7">
    <property type="interactions" value="486"/>
</dbReference>
<dbReference type="IntAct" id="Q86YB7">
    <property type="interactions" value="15"/>
</dbReference>
<dbReference type="STRING" id="9606.ENSP00000360577"/>
<dbReference type="iPTMnet" id="Q86YB7"/>
<dbReference type="PhosphoSitePlus" id="Q86YB7"/>
<dbReference type="BioMuta" id="ECHDC2"/>
<dbReference type="DMDM" id="160380686"/>
<dbReference type="jPOST" id="Q86YB7"/>
<dbReference type="MassIVE" id="Q86YB7"/>
<dbReference type="PaxDb" id="9606-ENSP00000360577"/>
<dbReference type="PeptideAtlas" id="Q86YB7"/>
<dbReference type="ProteomicsDB" id="70392">
    <molecule id="Q86YB7-1"/>
</dbReference>
<dbReference type="ProteomicsDB" id="70393">
    <molecule id="Q86YB7-2"/>
</dbReference>
<dbReference type="Antibodypedia" id="19158">
    <property type="antibodies" value="98 antibodies from 19 providers"/>
</dbReference>
<dbReference type="DNASU" id="55268"/>
<dbReference type="Ensembl" id="ENST00000358358.9">
    <molecule id="Q86YB7-2"/>
    <property type="protein sequence ID" value="ENSP00000351125.5"/>
    <property type="gene ID" value="ENSG00000121310.17"/>
</dbReference>
<dbReference type="Ensembl" id="ENST00000371522.9">
    <molecule id="Q86YB7-1"/>
    <property type="protein sequence ID" value="ENSP00000360577.4"/>
    <property type="gene ID" value="ENSG00000121310.17"/>
</dbReference>
<dbReference type="GeneID" id="55268"/>
<dbReference type="KEGG" id="hsa:55268"/>
<dbReference type="MANE-Select" id="ENST00000371522.9">
    <property type="protein sequence ID" value="ENSP00000360577.4"/>
    <property type="RefSeq nucleotide sequence ID" value="NM_001198961.2"/>
    <property type="RefSeq protein sequence ID" value="NP_001185890.1"/>
</dbReference>
<dbReference type="UCSC" id="uc001cuo.5">
    <molecule id="Q86YB7-1"/>
    <property type="organism name" value="human"/>
</dbReference>
<dbReference type="AGR" id="HGNC:23408"/>
<dbReference type="CTD" id="55268"/>
<dbReference type="DisGeNET" id="55268"/>
<dbReference type="GeneCards" id="ECHDC2"/>
<dbReference type="HGNC" id="HGNC:23408">
    <property type="gene designation" value="ECHDC2"/>
</dbReference>
<dbReference type="HPA" id="ENSG00000121310">
    <property type="expression patterns" value="Tissue enhanced (liver)"/>
</dbReference>
<dbReference type="MIM" id="620724">
    <property type="type" value="gene"/>
</dbReference>
<dbReference type="neXtProt" id="NX_Q86YB7"/>
<dbReference type="OpenTargets" id="ENSG00000121310"/>
<dbReference type="PharmGKB" id="PA134913726"/>
<dbReference type="VEuPathDB" id="HostDB:ENSG00000121310"/>
<dbReference type="eggNOG" id="KOG1679">
    <property type="taxonomic scope" value="Eukaryota"/>
</dbReference>
<dbReference type="GeneTree" id="ENSGT00940000158798"/>
<dbReference type="HOGENOM" id="CLU_009834_7_6_1"/>
<dbReference type="InParanoid" id="Q86YB7"/>
<dbReference type="OMA" id="WRSVAFS"/>
<dbReference type="OrthoDB" id="410701at2759"/>
<dbReference type="PAN-GO" id="Q86YB7">
    <property type="GO annotations" value="3 GO annotations based on evolutionary models"/>
</dbReference>
<dbReference type="PhylomeDB" id="Q86YB7"/>
<dbReference type="TreeFam" id="TF314276"/>
<dbReference type="PathwayCommons" id="Q86YB7"/>
<dbReference type="SignaLink" id="Q86YB7"/>
<dbReference type="BioGRID-ORCS" id="55268">
    <property type="hits" value="15 hits in 1160 CRISPR screens"/>
</dbReference>
<dbReference type="ChiTaRS" id="ECHDC2">
    <property type="organism name" value="human"/>
</dbReference>
<dbReference type="GenomeRNAi" id="55268"/>
<dbReference type="Pharos" id="Q86YB7">
    <property type="development level" value="Tdark"/>
</dbReference>
<dbReference type="PRO" id="PR:Q86YB7"/>
<dbReference type="Proteomes" id="UP000005640">
    <property type="component" value="Chromosome 1"/>
</dbReference>
<dbReference type="RNAct" id="Q86YB7">
    <property type="molecule type" value="protein"/>
</dbReference>
<dbReference type="Bgee" id="ENSG00000121310">
    <property type="expression patterns" value="Expressed in right lobe of liver and 196 other cell types or tissues"/>
</dbReference>
<dbReference type="ExpressionAtlas" id="Q86YB7">
    <property type="expression patterns" value="baseline and differential"/>
</dbReference>
<dbReference type="GO" id="GO:0005739">
    <property type="term" value="C:mitochondrion"/>
    <property type="evidence" value="ECO:0006056"/>
    <property type="project" value="FlyBase"/>
</dbReference>
<dbReference type="GO" id="GO:0016829">
    <property type="term" value="F:lyase activity"/>
    <property type="evidence" value="ECO:0007669"/>
    <property type="project" value="UniProtKB-KW"/>
</dbReference>
<dbReference type="GO" id="GO:0006635">
    <property type="term" value="P:fatty acid beta-oxidation"/>
    <property type="evidence" value="ECO:0000318"/>
    <property type="project" value="GO_Central"/>
</dbReference>
<dbReference type="CDD" id="cd06558">
    <property type="entry name" value="crotonase-like"/>
    <property type="match status" value="1"/>
</dbReference>
<dbReference type="FunFam" id="3.90.226.10:FF:000022">
    <property type="entry name" value="methylglutaconyl-CoA hydratase, mitochondrial isoform X1"/>
    <property type="match status" value="1"/>
</dbReference>
<dbReference type="FunFam" id="1.10.12.10:FF:000001">
    <property type="entry name" value="Probable enoyl-CoA hydratase, mitochondrial"/>
    <property type="match status" value="1"/>
</dbReference>
<dbReference type="Gene3D" id="3.90.226.10">
    <property type="entry name" value="2-enoyl-CoA Hydratase, Chain A, domain 1"/>
    <property type="match status" value="1"/>
</dbReference>
<dbReference type="Gene3D" id="1.10.12.10">
    <property type="entry name" value="Lyase 2-enoyl-coa Hydratase, Chain A, domain 2"/>
    <property type="match status" value="1"/>
</dbReference>
<dbReference type="InterPro" id="IPR029045">
    <property type="entry name" value="ClpP/crotonase-like_dom_sf"/>
</dbReference>
<dbReference type="InterPro" id="IPR018376">
    <property type="entry name" value="Enoyl-CoA_hyd/isom_CS"/>
</dbReference>
<dbReference type="InterPro" id="IPR001753">
    <property type="entry name" value="Enoyl-CoA_hydra/iso"/>
</dbReference>
<dbReference type="InterPro" id="IPR014748">
    <property type="entry name" value="Enoyl-CoA_hydra_C"/>
</dbReference>
<dbReference type="PANTHER" id="PTHR11941:SF44">
    <property type="entry name" value="ENOYL-COA HYDRATASE DOMAIN-CONTAINING PROTEIN 2, MITOCHONDRIAL"/>
    <property type="match status" value="1"/>
</dbReference>
<dbReference type="PANTHER" id="PTHR11941">
    <property type="entry name" value="ENOYL-COA HYDRATASE-RELATED"/>
    <property type="match status" value="1"/>
</dbReference>
<dbReference type="Pfam" id="PF00378">
    <property type="entry name" value="ECH_1"/>
    <property type="match status" value="1"/>
</dbReference>
<dbReference type="SUPFAM" id="SSF52096">
    <property type="entry name" value="ClpP/crotonase"/>
    <property type="match status" value="1"/>
</dbReference>
<dbReference type="PROSITE" id="PS00166">
    <property type="entry name" value="ENOYL_COA_HYDRATASE"/>
    <property type="match status" value="1"/>
</dbReference>
<evidence type="ECO:0000250" key="1"/>
<evidence type="ECO:0000250" key="2">
    <source>
        <dbReference type="UniProtKB" id="Q3TLP5"/>
    </source>
</evidence>
<evidence type="ECO:0000255" key="3"/>
<evidence type="ECO:0000269" key="4">
    <source>
    </source>
</evidence>
<evidence type="ECO:0000303" key="5">
    <source>
    </source>
</evidence>
<evidence type="ECO:0000305" key="6"/>
<gene>
    <name type="primary">ECHDC2</name>
</gene>
<keyword id="KW-0007">Acetylation</keyword>
<keyword id="KW-0025">Alternative splicing</keyword>
<keyword id="KW-0276">Fatty acid metabolism</keyword>
<keyword id="KW-0443">Lipid metabolism</keyword>
<keyword id="KW-0456">Lyase</keyword>
<keyword id="KW-0496">Mitochondrion</keyword>
<keyword id="KW-1267">Proteomics identification</keyword>
<keyword id="KW-1185">Reference proteome</keyword>
<keyword id="KW-0809">Transit peptide</keyword>
<comment type="subcellular location">
    <subcellularLocation>
        <location evidence="6">Mitochondrion</location>
    </subcellularLocation>
</comment>
<comment type="alternative products">
    <event type="alternative splicing"/>
    <isoform>
        <id>Q86YB7-1</id>
        <name>1</name>
        <sequence type="displayed"/>
    </isoform>
    <isoform>
        <id>Q86YB7-2</id>
        <name>2</name>
        <sequence type="described" ref="VSP_029177"/>
    </isoform>
</comment>
<comment type="similarity">
    <text evidence="6">Belongs to the enoyl-CoA hydratase/isomerase family.</text>
</comment>
<accession>Q86YB7</accession>
<accession>D3DQ36</accession>
<accession>Q9NV38</accession>